<gene>
    <name evidence="1" type="primary">viaA</name>
    <name type="ordered locus">SPAB_04822</name>
</gene>
<protein>
    <recommendedName>
        <fullName evidence="1">Regulatory protein ViaA</fullName>
    </recommendedName>
    <alternativeName>
        <fullName evidence="1">VWA interacting with AAA+ ATPase</fullName>
    </alternativeName>
</protein>
<accession>A9MXC2</accession>
<feature type="chain" id="PRO_1000088101" description="Regulatory protein ViaA">
    <location>
        <begin position="1"/>
        <end position="483"/>
    </location>
</feature>
<name>VIAA_SALPB</name>
<keyword id="KW-0143">Chaperone</keyword>
<keyword id="KW-0963">Cytoplasm</keyword>
<comment type="function">
    <text evidence="1">Component of the RavA-ViaA chaperone complex, which may act on the membrane to optimize the function of some of the respiratory chains. ViaA stimulates the ATPase activity of RavA.</text>
</comment>
<comment type="subunit">
    <text evidence="1">Homodimer. Interacts with RavA.</text>
</comment>
<comment type="subcellular location">
    <subcellularLocation>
        <location evidence="1">Cytoplasm</location>
    </subcellularLocation>
</comment>
<comment type="similarity">
    <text evidence="1">Belongs to the ViaA family.</text>
</comment>
<proteinExistence type="inferred from homology"/>
<reference key="1">
    <citation type="submission" date="2007-11" db="EMBL/GenBank/DDBJ databases">
        <authorList>
            <consortium name="The Salmonella enterica serovar Paratyphi B Genome Sequencing Project"/>
            <person name="McClelland M."/>
            <person name="Sanderson E.K."/>
            <person name="Porwollik S."/>
            <person name="Spieth J."/>
            <person name="Clifton W.S."/>
            <person name="Fulton R."/>
            <person name="Cordes M."/>
            <person name="Wollam A."/>
            <person name="Shah N."/>
            <person name="Pepin K."/>
            <person name="Bhonagiri V."/>
            <person name="Nash W."/>
            <person name="Johnson M."/>
            <person name="Thiruvilangam P."/>
            <person name="Wilson R."/>
        </authorList>
    </citation>
    <scope>NUCLEOTIDE SEQUENCE [LARGE SCALE GENOMIC DNA]</scope>
    <source>
        <strain>ATCC BAA-1250 / SPB7</strain>
    </source>
</reference>
<dbReference type="EMBL" id="CP000886">
    <property type="protein sequence ID" value="ABX70133.1"/>
    <property type="molecule type" value="Genomic_DNA"/>
</dbReference>
<dbReference type="RefSeq" id="WP_000956588.1">
    <property type="nucleotide sequence ID" value="NC_010102.1"/>
</dbReference>
<dbReference type="SMR" id="A9MXC2"/>
<dbReference type="KEGG" id="spq:SPAB_04822"/>
<dbReference type="PATRIC" id="fig|1016998.12.peg.4536"/>
<dbReference type="HOGENOM" id="CLU_022130_0_0_6"/>
<dbReference type="BioCyc" id="SENT1016998:SPAB_RS19580-MONOMER"/>
<dbReference type="Proteomes" id="UP000008556">
    <property type="component" value="Chromosome"/>
</dbReference>
<dbReference type="GO" id="GO:0005829">
    <property type="term" value="C:cytosol"/>
    <property type="evidence" value="ECO:0007669"/>
    <property type="project" value="TreeGrafter"/>
</dbReference>
<dbReference type="CDD" id="cd01462">
    <property type="entry name" value="VWA_YIEM_type"/>
    <property type="match status" value="1"/>
</dbReference>
<dbReference type="Gene3D" id="3.40.50.410">
    <property type="entry name" value="von Willebrand factor, type A domain"/>
    <property type="match status" value="1"/>
</dbReference>
<dbReference type="HAMAP" id="MF_01626">
    <property type="entry name" value="ViaA"/>
    <property type="match status" value="1"/>
</dbReference>
<dbReference type="InterPro" id="IPR008912">
    <property type="entry name" value="Uncharacterised_CoxE"/>
</dbReference>
<dbReference type="InterPro" id="IPR023481">
    <property type="entry name" value="Uncharacterised_ViaA"/>
</dbReference>
<dbReference type="InterPro" id="IPR002035">
    <property type="entry name" value="VWF_A"/>
</dbReference>
<dbReference type="InterPro" id="IPR036465">
    <property type="entry name" value="vWFA_dom_sf"/>
</dbReference>
<dbReference type="NCBIfam" id="NF008230">
    <property type="entry name" value="PRK10997.1"/>
    <property type="match status" value="1"/>
</dbReference>
<dbReference type="PANTHER" id="PTHR36846">
    <property type="entry name" value="PROTEIN VIAA"/>
    <property type="match status" value="1"/>
</dbReference>
<dbReference type="PANTHER" id="PTHR36846:SF1">
    <property type="entry name" value="PROTEIN VIAA"/>
    <property type="match status" value="1"/>
</dbReference>
<dbReference type="Pfam" id="PF05762">
    <property type="entry name" value="VWA_CoxE"/>
    <property type="match status" value="1"/>
</dbReference>
<dbReference type="SMART" id="SM00327">
    <property type="entry name" value="VWA"/>
    <property type="match status" value="1"/>
</dbReference>
<dbReference type="SUPFAM" id="SSF53300">
    <property type="entry name" value="vWA-like"/>
    <property type="match status" value="1"/>
</dbReference>
<organism>
    <name type="scientific">Salmonella paratyphi B (strain ATCC BAA-1250 / SPB7)</name>
    <dbReference type="NCBI Taxonomy" id="1016998"/>
    <lineage>
        <taxon>Bacteria</taxon>
        <taxon>Pseudomonadati</taxon>
        <taxon>Pseudomonadota</taxon>
        <taxon>Gammaproteobacteria</taxon>
        <taxon>Enterobacterales</taxon>
        <taxon>Enterobacteriaceae</taxon>
        <taxon>Salmonella</taxon>
    </lineage>
</organism>
<evidence type="ECO:0000255" key="1">
    <source>
        <dbReference type="HAMAP-Rule" id="MF_01626"/>
    </source>
</evidence>
<sequence length="483" mass="55431">MLTLDTLNTMLAVSEEGMVEEMILALLASPQLVIFFEKFPRLKNAVTADLPRWREALRSRLKDARVPPELTEEVMCYQQSQLLSTPQFIVQLPQILALLHRLHSPYAAQAKQLTESNSTFTPALHTLFLQRWRLSLVVQATTLNQQLLEEEREQLLSDVQERMTLSGQLEPTLAENDNAAGRLWDMSAGQLKRGDYQLIVKYGEFLAAQPELMQLAEQLGRSREAKSVPKKDAPMETFRTLVREPATVPEQVDGIQQGDDILRLLPPELATLGITELEYEFYRRLVEKQLLTYRLHGEAWREKVTERPVVHQDVDEQPRGPFIVCVDTSGSMGGFNEQCAKAFCLALMRVALADNRRCFIMLFSTDVVRYELSGPEGIEQAIRFLSQRFRGGTDIASCFRAIIERMQGREWFDADAVVISDFIAQRLPDDVVSKVGELQRLHQHRFHAVAMSAHGKPGIMRIFDHIWRFDTGMRSRLLRRWRR</sequence>